<sequence>MVQTSTNKINHFESANKVLYEGKDSKNPLAFKYYNPEEVVGGKTMKDQLRFSVAYWHTFTADGTDPFGAATMQRSWDRYDGMDLAKARVEAAFQLFETLNVPFFAFHDRDIAPEGSTLQETNKNLDVIVTMIKEYMQTSNVKLLWNTANMFTNPRFVHGAATSCNADVFAYAAAQVKKGLETAKELGAENYVFWGGREGYETLLNTNLQLELDNLARFMHMAVDYATEIGYTGQFLIEPKPKEPTTHQYDTDAATTISFLRQYGLDKYFKLNLEANHATLAGHTFEHELRVARVQGLLGSVDANQGDPLLGWDTDEFPTDLYSTTLAMYEILQNGGLGSGGLNFDAKVRRGSFEQDDLLYAHVAGMDAFARGLKVAHKLVEDRVFENVINERYSSFKEGIGLEIVEGKANFHTLEQYAFKNPNIANKSGRQERLKSILNQYILEV</sequence>
<keyword id="KW-0119">Carbohydrate metabolism</keyword>
<keyword id="KW-0963">Cytoplasm</keyword>
<keyword id="KW-0413">Isomerase</keyword>
<keyword id="KW-0460">Magnesium</keyword>
<keyword id="KW-0479">Metal-binding</keyword>
<keyword id="KW-0859">Xylose metabolism</keyword>
<feature type="chain" id="PRO_0000195764" description="Xylose isomerase">
    <location>
        <begin position="1"/>
        <end position="445"/>
    </location>
</feature>
<feature type="active site" evidence="1">
    <location>
        <position position="107"/>
    </location>
</feature>
<feature type="active site" evidence="1">
    <location>
        <position position="110"/>
    </location>
</feature>
<feature type="binding site" evidence="1">
    <location>
        <position position="238"/>
    </location>
    <ligand>
        <name>Mg(2+)</name>
        <dbReference type="ChEBI" id="CHEBI:18420"/>
        <label>1</label>
    </ligand>
</feature>
<feature type="binding site" evidence="1">
    <location>
        <position position="274"/>
    </location>
    <ligand>
        <name>Mg(2+)</name>
        <dbReference type="ChEBI" id="CHEBI:18420"/>
        <label>1</label>
    </ligand>
</feature>
<feature type="binding site" evidence="1">
    <location>
        <position position="274"/>
    </location>
    <ligand>
        <name>Mg(2+)</name>
        <dbReference type="ChEBI" id="CHEBI:18420"/>
        <label>2</label>
    </ligand>
</feature>
<feature type="binding site" evidence="1">
    <location>
        <position position="277"/>
    </location>
    <ligand>
        <name>Mg(2+)</name>
        <dbReference type="ChEBI" id="CHEBI:18420"/>
        <label>2</label>
    </ligand>
</feature>
<feature type="binding site" evidence="1">
    <location>
        <position position="302"/>
    </location>
    <ligand>
        <name>Mg(2+)</name>
        <dbReference type="ChEBI" id="CHEBI:18420"/>
        <label>1</label>
    </ligand>
</feature>
<feature type="binding site" evidence="1">
    <location>
        <position position="313"/>
    </location>
    <ligand>
        <name>Mg(2+)</name>
        <dbReference type="ChEBI" id="CHEBI:18420"/>
        <label>2</label>
    </ligand>
</feature>
<feature type="binding site" evidence="1">
    <location>
        <position position="315"/>
    </location>
    <ligand>
        <name>Mg(2+)</name>
        <dbReference type="ChEBI" id="CHEBI:18420"/>
        <label>2</label>
    </ligand>
</feature>
<feature type="binding site" evidence="1">
    <location>
        <position position="345"/>
    </location>
    <ligand>
        <name>Mg(2+)</name>
        <dbReference type="ChEBI" id="CHEBI:18420"/>
        <label>1</label>
    </ligand>
</feature>
<feature type="sequence conflict" description="In Ref. 1; CAA40821 and 2; CAA96094." evidence="2" ref="1 2">
    <original>T</original>
    <variation>Q</variation>
    <location>
        <position position="58"/>
    </location>
</feature>
<feature type="sequence conflict" description="In Ref. 1; CAA40821 and 2; CAA96094." evidence="2" ref="1 2">
    <original>A</original>
    <variation>R</variation>
    <location>
        <position position="170"/>
    </location>
</feature>
<protein>
    <recommendedName>
        <fullName>Xylose isomerase</fullName>
        <ecNumber>5.3.1.5</ecNumber>
    </recommendedName>
</protein>
<accession>O08325</accession>
<accession>D5DF38</accession>
<comment type="catalytic activity">
    <reaction>
        <text>alpha-D-xylose = alpha-D-xylulofuranose</text>
        <dbReference type="Rhea" id="RHEA:22816"/>
        <dbReference type="ChEBI" id="CHEBI:28518"/>
        <dbReference type="ChEBI" id="CHEBI:188998"/>
        <dbReference type="EC" id="5.3.1.5"/>
    </reaction>
</comment>
<comment type="cofactor">
    <cofactor evidence="1">
        <name>Mg(2+)</name>
        <dbReference type="ChEBI" id="CHEBI:18420"/>
    </cofactor>
    <text evidence="1">Binds 2 magnesium ions per subunit.</text>
</comment>
<comment type="subunit">
    <text evidence="1">Homotetramer.</text>
</comment>
<comment type="subcellular location">
    <subcellularLocation>
        <location>Cytoplasm</location>
    </subcellularLocation>
</comment>
<comment type="similarity">
    <text evidence="2">Belongs to the xylose isomerase family.</text>
</comment>
<reference key="1">
    <citation type="journal article" date="1991" name="Arch. Microbiol.">
        <title>Molecular cloning, structure, promoters and regulatory elements for transcription of the Bacillus megaterium encoded regulon for xylose utilization.</title>
        <authorList>
            <person name="Rygus T."/>
            <person name="Scheler A."/>
            <person name="Allmansberger R."/>
            <person name="Hillen W."/>
        </authorList>
    </citation>
    <scope>NUCLEOTIDE SEQUENCE [GENOMIC DNA]</scope>
</reference>
<reference key="2">
    <citation type="journal article" date="1997" name="Mol. Microbiol.">
        <title>Regulation of expression, genetic organization and substrate specificity of xylose uptake in Bacillus megaterium.</title>
        <authorList>
            <person name="Schmiedel D."/>
            <person name="Kintrup M."/>
            <person name="Kuster E."/>
            <person name="Hillen W."/>
        </authorList>
    </citation>
    <scope>NUCLEOTIDE SEQUENCE [GENOMIC DNA]</scope>
</reference>
<reference key="3">
    <citation type="journal article" date="2011" name="J. Bacteriol.">
        <title>Genome sequences of the biotechnologically important Bacillus megaterium strains QM B1551 and DSM319.</title>
        <authorList>
            <person name="Eppinger M."/>
            <person name="Bunk B."/>
            <person name="Johns M.A."/>
            <person name="Edirisinghe J.N."/>
            <person name="Kutumbaka K.K."/>
            <person name="Koenig S.S."/>
            <person name="Creasy H.H."/>
            <person name="Rosovitz M.J."/>
            <person name="Riley D.R."/>
            <person name="Daugherty S."/>
            <person name="Martin M."/>
            <person name="Elbourne L.D."/>
            <person name="Paulsen I."/>
            <person name="Biedendieck R."/>
            <person name="Braun C."/>
            <person name="Grayburn S."/>
            <person name="Dhingra S."/>
            <person name="Lukyanchuk V."/>
            <person name="Ball B."/>
            <person name="Ul-Qamar R."/>
            <person name="Seibel J."/>
            <person name="Bremer E."/>
            <person name="Jahn D."/>
            <person name="Ravel J."/>
            <person name="Vary P.S."/>
        </authorList>
    </citation>
    <scope>NUCLEOTIDE SEQUENCE [LARGE SCALE GENOMIC DNA]</scope>
    <source>
        <strain>DSM 319 / IMG 1521</strain>
    </source>
</reference>
<evidence type="ECO:0000250" key="1"/>
<evidence type="ECO:0000305" key="2"/>
<gene>
    <name type="primary">xylA</name>
    <name type="ordered locus">BMD_1858</name>
</gene>
<proteinExistence type="inferred from homology"/>
<organism>
    <name type="scientific">Priestia megaterium (strain DSM 319 / IMG 1521)</name>
    <name type="common">Bacillus megaterium</name>
    <dbReference type="NCBI Taxonomy" id="592022"/>
    <lineage>
        <taxon>Bacteria</taxon>
        <taxon>Bacillati</taxon>
        <taxon>Bacillota</taxon>
        <taxon>Bacilli</taxon>
        <taxon>Bacillales</taxon>
        <taxon>Bacillaceae</taxon>
        <taxon>Priestia</taxon>
    </lineage>
</organism>
<dbReference type="EC" id="5.3.1.5"/>
<dbReference type="EMBL" id="X57598">
    <property type="protein sequence ID" value="CAA40821.1"/>
    <property type="molecule type" value="Genomic_DNA"/>
</dbReference>
<dbReference type="EMBL" id="Z71474">
    <property type="protein sequence ID" value="CAA96094.1"/>
    <property type="molecule type" value="Genomic_DNA"/>
</dbReference>
<dbReference type="EMBL" id="CP001982">
    <property type="protein sequence ID" value="ADF38711.1"/>
    <property type="molecule type" value="Genomic_DNA"/>
</dbReference>
<dbReference type="RefSeq" id="WP_013082761.1">
    <property type="nucleotide sequence ID" value="NC_014103.1"/>
</dbReference>
<dbReference type="SMR" id="O08325"/>
<dbReference type="KEGG" id="bmd:BMD_1858"/>
<dbReference type="PATRIC" id="fig|592022.4.peg.1800"/>
<dbReference type="HOGENOM" id="CLU_037261_1_0_9"/>
<dbReference type="Proteomes" id="UP000002365">
    <property type="component" value="Chromosome"/>
</dbReference>
<dbReference type="GO" id="GO:0005737">
    <property type="term" value="C:cytoplasm"/>
    <property type="evidence" value="ECO:0007669"/>
    <property type="project" value="UniProtKB-SubCell"/>
</dbReference>
<dbReference type="GO" id="GO:0000287">
    <property type="term" value="F:magnesium ion binding"/>
    <property type="evidence" value="ECO:0007669"/>
    <property type="project" value="UniProtKB-UniRule"/>
</dbReference>
<dbReference type="GO" id="GO:0009045">
    <property type="term" value="F:xylose isomerase activity"/>
    <property type="evidence" value="ECO:0007669"/>
    <property type="project" value="UniProtKB-UniRule"/>
</dbReference>
<dbReference type="GO" id="GO:0042732">
    <property type="term" value="P:D-xylose metabolic process"/>
    <property type="evidence" value="ECO:0007669"/>
    <property type="project" value="UniProtKB-UniRule"/>
</dbReference>
<dbReference type="FunFam" id="3.20.20.150:FF:000002">
    <property type="entry name" value="Xylose isomerase"/>
    <property type="match status" value="1"/>
</dbReference>
<dbReference type="Gene3D" id="3.20.20.150">
    <property type="entry name" value="Divalent-metal-dependent TIM barrel enzymes"/>
    <property type="match status" value="1"/>
</dbReference>
<dbReference type="HAMAP" id="MF_00455">
    <property type="entry name" value="Xylose_isom_A"/>
    <property type="match status" value="1"/>
</dbReference>
<dbReference type="InterPro" id="IPR036237">
    <property type="entry name" value="Xyl_isomerase-like_sf"/>
</dbReference>
<dbReference type="InterPro" id="IPR013452">
    <property type="entry name" value="Xylose_isom_bac"/>
</dbReference>
<dbReference type="InterPro" id="IPR001998">
    <property type="entry name" value="Xylose_isomerase"/>
</dbReference>
<dbReference type="NCBIfam" id="NF003998">
    <property type="entry name" value="PRK05474.1"/>
    <property type="match status" value="1"/>
</dbReference>
<dbReference type="NCBIfam" id="TIGR02630">
    <property type="entry name" value="xylose_isom_A"/>
    <property type="match status" value="1"/>
</dbReference>
<dbReference type="PANTHER" id="PTHR48408">
    <property type="match status" value="1"/>
</dbReference>
<dbReference type="PANTHER" id="PTHR48408:SF1">
    <property type="entry name" value="XYLOSE ISOMERASE"/>
    <property type="match status" value="1"/>
</dbReference>
<dbReference type="PRINTS" id="PR00688">
    <property type="entry name" value="XYLOSISMRASE"/>
</dbReference>
<dbReference type="SUPFAM" id="SSF51658">
    <property type="entry name" value="Xylose isomerase-like"/>
    <property type="match status" value="1"/>
</dbReference>
<dbReference type="PROSITE" id="PS51415">
    <property type="entry name" value="XYLOSE_ISOMERASE"/>
    <property type="match status" value="1"/>
</dbReference>
<name>XYLA_PRIM3</name>